<feature type="chain" id="PRO_0000122037" description="Serine--tRNA ligase">
    <location>
        <begin position="1"/>
        <end position="426"/>
    </location>
</feature>
<feature type="binding site" evidence="1">
    <location>
        <begin position="233"/>
        <end position="235"/>
    </location>
    <ligand>
        <name>L-serine</name>
        <dbReference type="ChEBI" id="CHEBI:33384"/>
    </ligand>
</feature>
<feature type="binding site" evidence="1">
    <location>
        <begin position="264"/>
        <end position="266"/>
    </location>
    <ligand>
        <name>ATP</name>
        <dbReference type="ChEBI" id="CHEBI:30616"/>
    </ligand>
</feature>
<feature type="binding site" evidence="1">
    <location>
        <position position="287"/>
    </location>
    <ligand>
        <name>L-serine</name>
        <dbReference type="ChEBI" id="CHEBI:33384"/>
    </ligand>
</feature>
<feature type="binding site" evidence="1">
    <location>
        <begin position="351"/>
        <end position="354"/>
    </location>
    <ligand>
        <name>ATP</name>
        <dbReference type="ChEBI" id="CHEBI:30616"/>
    </ligand>
</feature>
<feature type="binding site" evidence="1">
    <location>
        <position position="387"/>
    </location>
    <ligand>
        <name>L-serine</name>
        <dbReference type="ChEBI" id="CHEBI:33384"/>
    </ligand>
</feature>
<organism>
    <name type="scientific">Clostridium tetani (strain Massachusetts / E88)</name>
    <dbReference type="NCBI Taxonomy" id="212717"/>
    <lineage>
        <taxon>Bacteria</taxon>
        <taxon>Bacillati</taxon>
        <taxon>Bacillota</taxon>
        <taxon>Clostridia</taxon>
        <taxon>Eubacteriales</taxon>
        <taxon>Clostridiaceae</taxon>
        <taxon>Clostridium</taxon>
    </lineage>
</organism>
<dbReference type="EC" id="6.1.1.11" evidence="1"/>
<dbReference type="EMBL" id="AE015927">
    <property type="protein sequence ID" value="AAO34735.1"/>
    <property type="molecule type" value="Genomic_DNA"/>
</dbReference>
<dbReference type="RefSeq" id="WP_011098408.1">
    <property type="nucleotide sequence ID" value="NC_004557.1"/>
</dbReference>
<dbReference type="SMR" id="Q899T6"/>
<dbReference type="STRING" id="212717.CTC_00081"/>
<dbReference type="GeneID" id="24253962"/>
<dbReference type="KEGG" id="ctc:CTC_00081"/>
<dbReference type="HOGENOM" id="CLU_023797_1_1_9"/>
<dbReference type="OrthoDB" id="9804647at2"/>
<dbReference type="UniPathway" id="UPA00906">
    <property type="reaction ID" value="UER00895"/>
</dbReference>
<dbReference type="Proteomes" id="UP000001412">
    <property type="component" value="Chromosome"/>
</dbReference>
<dbReference type="GO" id="GO:0005737">
    <property type="term" value="C:cytoplasm"/>
    <property type="evidence" value="ECO:0007669"/>
    <property type="project" value="UniProtKB-SubCell"/>
</dbReference>
<dbReference type="GO" id="GO:0005524">
    <property type="term" value="F:ATP binding"/>
    <property type="evidence" value="ECO:0007669"/>
    <property type="project" value="UniProtKB-UniRule"/>
</dbReference>
<dbReference type="GO" id="GO:0140096">
    <property type="term" value="F:catalytic activity, acting on a protein"/>
    <property type="evidence" value="ECO:0007669"/>
    <property type="project" value="UniProtKB-ARBA"/>
</dbReference>
<dbReference type="GO" id="GO:0004828">
    <property type="term" value="F:serine-tRNA ligase activity"/>
    <property type="evidence" value="ECO:0007669"/>
    <property type="project" value="UniProtKB-UniRule"/>
</dbReference>
<dbReference type="GO" id="GO:0016740">
    <property type="term" value="F:transferase activity"/>
    <property type="evidence" value="ECO:0007669"/>
    <property type="project" value="UniProtKB-ARBA"/>
</dbReference>
<dbReference type="GO" id="GO:0016260">
    <property type="term" value="P:selenocysteine biosynthetic process"/>
    <property type="evidence" value="ECO:0007669"/>
    <property type="project" value="UniProtKB-UniRule"/>
</dbReference>
<dbReference type="GO" id="GO:0006434">
    <property type="term" value="P:seryl-tRNA aminoacylation"/>
    <property type="evidence" value="ECO:0007669"/>
    <property type="project" value="UniProtKB-UniRule"/>
</dbReference>
<dbReference type="CDD" id="cd00770">
    <property type="entry name" value="SerRS_core"/>
    <property type="match status" value="1"/>
</dbReference>
<dbReference type="Gene3D" id="3.30.930.10">
    <property type="entry name" value="Bira Bifunctional Protein, Domain 2"/>
    <property type="match status" value="1"/>
</dbReference>
<dbReference type="Gene3D" id="1.10.287.40">
    <property type="entry name" value="Serine-tRNA synthetase, tRNA binding domain"/>
    <property type="match status" value="1"/>
</dbReference>
<dbReference type="HAMAP" id="MF_00176">
    <property type="entry name" value="Ser_tRNA_synth_type1"/>
    <property type="match status" value="1"/>
</dbReference>
<dbReference type="InterPro" id="IPR002314">
    <property type="entry name" value="aa-tRNA-synt_IIb"/>
</dbReference>
<dbReference type="InterPro" id="IPR006195">
    <property type="entry name" value="aa-tRNA-synth_II"/>
</dbReference>
<dbReference type="InterPro" id="IPR045864">
    <property type="entry name" value="aa-tRNA-synth_II/BPL/LPL"/>
</dbReference>
<dbReference type="InterPro" id="IPR002317">
    <property type="entry name" value="Ser-tRNA-ligase_type_1"/>
</dbReference>
<dbReference type="InterPro" id="IPR015866">
    <property type="entry name" value="Ser-tRNA-synth_1_N"/>
</dbReference>
<dbReference type="InterPro" id="IPR042103">
    <property type="entry name" value="SerRS_1_N_sf"/>
</dbReference>
<dbReference type="InterPro" id="IPR033729">
    <property type="entry name" value="SerRS_core"/>
</dbReference>
<dbReference type="InterPro" id="IPR010978">
    <property type="entry name" value="tRNA-bd_arm"/>
</dbReference>
<dbReference type="NCBIfam" id="TIGR00414">
    <property type="entry name" value="serS"/>
    <property type="match status" value="1"/>
</dbReference>
<dbReference type="PANTHER" id="PTHR43697:SF1">
    <property type="entry name" value="SERINE--TRNA LIGASE"/>
    <property type="match status" value="1"/>
</dbReference>
<dbReference type="PANTHER" id="PTHR43697">
    <property type="entry name" value="SERYL-TRNA SYNTHETASE"/>
    <property type="match status" value="1"/>
</dbReference>
<dbReference type="Pfam" id="PF02403">
    <property type="entry name" value="Seryl_tRNA_N"/>
    <property type="match status" value="1"/>
</dbReference>
<dbReference type="Pfam" id="PF00587">
    <property type="entry name" value="tRNA-synt_2b"/>
    <property type="match status" value="1"/>
</dbReference>
<dbReference type="PIRSF" id="PIRSF001529">
    <property type="entry name" value="Ser-tRNA-synth_IIa"/>
    <property type="match status" value="1"/>
</dbReference>
<dbReference type="PRINTS" id="PR00981">
    <property type="entry name" value="TRNASYNTHSER"/>
</dbReference>
<dbReference type="SUPFAM" id="SSF55681">
    <property type="entry name" value="Class II aaRS and biotin synthetases"/>
    <property type="match status" value="1"/>
</dbReference>
<dbReference type="SUPFAM" id="SSF46589">
    <property type="entry name" value="tRNA-binding arm"/>
    <property type="match status" value="1"/>
</dbReference>
<dbReference type="PROSITE" id="PS50862">
    <property type="entry name" value="AA_TRNA_LIGASE_II"/>
    <property type="match status" value="1"/>
</dbReference>
<name>SYS_CLOTE</name>
<comment type="function">
    <text evidence="1">Catalyzes the attachment of serine to tRNA(Ser). Is also able to aminoacylate tRNA(Sec) with serine, to form the misacylated tRNA L-seryl-tRNA(Sec), which will be further converted into selenocysteinyl-tRNA(Sec).</text>
</comment>
<comment type="catalytic activity">
    <reaction evidence="1">
        <text>tRNA(Ser) + L-serine + ATP = L-seryl-tRNA(Ser) + AMP + diphosphate + H(+)</text>
        <dbReference type="Rhea" id="RHEA:12292"/>
        <dbReference type="Rhea" id="RHEA-COMP:9669"/>
        <dbReference type="Rhea" id="RHEA-COMP:9703"/>
        <dbReference type="ChEBI" id="CHEBI:15378"/>
        <dbReference type="ChEBI" id="CHEBI:30616"/>
        <dbReference type="ChEBI" id="CHEBI:33019"/>
        <dbReference type="ChEBI" id="CHEBI:33384"/>
        <dbReference type="ChEBI" id="CHEBI:78442"/>
        <dbReference type="ChEBI" id="CHEBI:78533"/>
        <dbReference type="ChEBI" id="CHEBI:456215"/>
        <dbReference type="EC" id="6.1.1.11"/>
    </reaction>
</comment>
<comment type="catalytic activity">
    <reaction evidence="1">
        <text>tRNA(Sec) + L-serine + ATP = L-seryl-tRNA(Sec) + AMP + diphosphate + H(+)</text>
        <dbReference type="Rhea" id="RHEA:42580"/>
        <dbReference type="Rhea" id="RHEA-COMP:9742"/>
        <dbReference type="Rhea" id="RHEA-COMP:10128"/>
        <dbReference type="ChEBI" id="CHEBI:15378"/>
        <dbReference type="ChEBI" id="CHEBI:30616"/>
        <dbReference type="ChEBI" id="CHEBI:33019"/>
        <dbReference type="ChEBI" id="CHEBI:33384"/>
        <dbReference type="ChEBI" id="CHEBI:78442"/>
        <dbReference type="ChEBI" id="CHEBI:78533"/>
        <dbReference type="ChEBI" id="CHEBI:456215"/>
        <dbReference type="EC" id="6.1.1.11"/>
    </reaction>
</comment>
<comment type="pathway">
    <text evidence="1">Aminoacyl-tRNA biosynthesis; selenocysteinyl-tRNA(Sec) biosynthesis; L-seryl-tRNA(Sec) from L-serine and tRNA(Sec): step 1/1.</text>
</comment>
<comment type="subunit">
    <text evidence="1">Homodimer. The tRNA molecule binds across the dimer.</text>
</comment>
<comment type="subcellular location">
    <subcellularLocation>
        <location evidence="1">Cytoplasm</location>
    </subcellularLocation>
</comment>
<comment type="domain">
    <text evidence="1">Consists of two distinct domains, a catalytic core and a N-terminal extension that is involved in tRNA binding.</text>
</comment>
<comment type="similarity">
    <text evidence="1">Belongs to the class-II aminoacyl-tRNA synthetase family. Type-1 seryl-tRNA synthetase subfamily.</text>
</comment>
<accession>Q899T6</accession>
<evidence type="ECO:0000255" key="1">
    <source>
        <dbReference type="HAMAP-Rule" id="MF_00176"/>
    </source>
</evidence>
<proteinExistence type="inferred from homology"/>
<sequence length="426" mass="48741">MLDLKRIRSNPEEIKKALAGRGEDFDVSVIDKVLQLDEERRNILVEVESLKNKRKQESAKIPQFKKEGKNVDDIMAEMKELAGKIKKLDERLSEIDGSIEYIMLRIPNIPNPNVPNGDSDEDNVEIRRWGEATTFEFEPKAHWDLGVNLDILDFERAGKVTGSRFTFYKGLGARLERAVINYYLDTHIDEHGYTEILPPYMVNRKSMTGTGQLPKFEEDAFRLEEQDYFLIPTAEVPVTNLYRDEILNGSDLPMKHVAYSACFRSEAGSAGRDTRGLVRQHQFNKVELVKFTKPEQSYEELEKLTKDAEDVLQGLGIPYRVVRICKGDLGFTAALKYDIEVWMPSYNRYVEISSCSNFEDFQSRRANIKYRENPKDKPNFVHTLNGSGVAVGRTVAAIIENFQQADGTIIIPEKLRPYMGGKDVIK</sequence>
<reference key="1">
    <citation type="journal article" date="2003" name="Proc. Natl. Acad. Sci. U.S.A.">
        <title>The genome sequence of Clostridium tetani, the causative agent of tetanus disease.</title>
        <authorList>
            <person name="Brueggemann H."/>
            <person name="Baeumer S."/>
            <person name="Fricke W.F."/>
            <person name="Wiezer A."/>
            <person name="Liesegang H."/>
            <person name="Decker I."/>
            <person name="Herzberg C."/>
            <person name="Martinez-Arias R."/>
            <person name="Merkl R."/>
            <person name="Henne A."/>
            <person name="Gottschalk G."/>
        </authorList>
    </citation>
    <scope>NUCLEOTIDE SEQUENCE [LARGE SCALE GENOMIC DNA]</scope>
    <source>
        <strain>Massachusetts / E88</strain>
    </source>
</reference>
<gene>
    <name evidence="1" type="primary">serS</name>
    <name type="ordered locus">CTC_00081</name>
</gene>
<protein>
    <recommendedName>
        <fullName evidence="1">Serine--tRNA ligase</fullName>
        <ecNumber evidence="1">6.1.1.11</ecNumber>
    </recommendedName>
    <alternativeName>
        <fullName evidence="1">Seryl-tRNA synthetase</fullName>
        <shortName evidence="1">SerRS</shortName>
    </alternativeName>
    <alternativeName>
        <fullName evidence="1">Seryl-tRNA(Ser/Sec) synthetase</fullName>
    </alternativeName>
</protein>
<keyword id="KW-0030">Aminoacyl-tRNA synthetase</keyword>
<keyword id="KW-0067">ATP-binding</keyword>
<keyword id="KW-0963">Cytoplasm</keyword>
<keyword id="KW-0436">Ligase</keyword>
<keyword id="KW-0547">Nucleotide-binding</keyword>
<keyword id="KW-0648">Protein biosynthesis</keyword>
<keyword id="KW-1185">Reference proteome</keyword>